<evidence type="ECO:0000255" key="1">
    <source>
        <dbReference type="HAMAP-Rule" id="MF_00379"/>
    </source>
</evidence>
<protein>
    <recommendedName>
        <fullName evidence="1">tRNA modification GTPase MnmE</fullName>
        <ecNumber evidence="1">3.6.-.-</ecNumber>
    </recommendedName>
</protein>
<gene>
    <name evidence="1" type="primary">mnmE</name>
    <name evidence="1" type="synonym">trmE</name>
    <name type="ordered locus">MS0480</name>
</gene>
<dbReference type="EC" id="3.6.-.-" evidence="1"/>
<dbReference type="EMBL" id="AE016827">
    <property type="protein sequence ID" value="AAU37087.1"/>
    <property type="molecule type" value="Genomic_DNA"/>
</dbReference>
<dbReference type="SMR" id="Q65VC3"/>
<dbReference type="STRING" id="221988.MS0480"/>
<dbReference type="KEGG" id="msu:MS0480"/>
<dbReference type="eggNOG" id="COG0486">
    <property type="taxonomic scope" value="Bacteria"/>
</dbReference>
<dbReference type="HOGENOM" id="CLU_019624_4_1_6"/>
<dbReference type="OrthoDB" id="9805918at2"/>
<dbReference type="Proteomes" id="UP000000607">
    <property type="component" value="Chromosome"/>
</dbReference>
<dbReference type="GO" id="GO:0005829">
    <property type="term" value="C:cytosol"/>
    <property type="evidence" value="ECO:0007669"/>
    <property type="project" value="TreeGrafter"/>
</dbReference>
<dbReference type="GO" id="GO:0005525">
    <property type="term" value="F:GTP binding"/>
    <property type="evidence" value="ECO:0007669"/>
    <property type="project" value="UniProtKB-UniRule"/>
</dbReference>
<dbReference type="GO" id="GO:0003924">
    <property type="term" value="F:GTPase activity"/>
    <property type="evidence" value="ECO:0007669"/>
    <property type="project" value="UniProtKB-UniRule"/>
</dbReference>
<dbReference type="GO" id="GO:0046872">
    <property type="term" value="F:metal ion binding"/>
    <property type="evidence" value="ECO:0007669"/>
    <property type="project" value="UniProtKB-KW"/>
</dbReference>
<dbReference type="GO" id="GO:0030488">
    <property type="term" value="P:tRNA methylation"/>
    <property type="evidence" value="ECO:0007669"/>
    <property type="project" value="TreeGrafter"/>
</dbReference>
<dbReference type="GO" id="GO:0002098">
    <property type="term" value="P:tRNA wobble uridine modification"/>
    <property type="evidence" value="ECO:0007669"/>
    <property type="project" value="TreeGrafter"/>
</dbReference>
<dbReference type="CDD" id="cd04164">
    <property type="entry name" value="trmE"/>
    <property type="match status" value="1"/>
</dbReference>
<dbReference type="CDD" id="cd14858">
    <property type="entry name" value="TrmE_N"/>
    <property type="match status" value="1"/>
</dbReference>
<dbReference type="FunFam" id="3.30.1360.120:FF:000001">
    <property type="entry name" value="tRNA modification GTPase MnmE"/>
    <property type="match status" value="1"/>
</dbReference>
<dbReference type="FunFam" id="3.40.50.300:FF:000249">
    <property type="entry name" value="tRNA modification GTPase MnmE"/>
    <property type="match status" value="1"/>
</dbReference>
<dbReference type="Gene3D" id="3.40.50.300">
    <property type="entry name" value="P-loop containing nucleotide triphosphate hydrolases"/>
    <property type="match status" value="1"/>
</dbReference>
<dbReference type="Gene3D" id="3.30.1360.120">
    <property type="entry name" value="Probable tRNA modification gtpase trme, domain 1"/>
    <property type="match status" value="1"/>
</dbReference>
<dbReference type="Gene3D" id="1.20.120.430">
    <property type="entry name" value="tRNA modification GTPase MnmE domain 2"/>
    <property type="match status" value="1"/>
</dbReference>
<dbReference type="HAMAP" id="MF_00379">
    <property type="entry name" value="GTPase_MnmE"/>
    <property type="match status" value="1"/>
</dbReference>
<dbReference type="InterPro" id="IPR031168">
    <property type="entry name" value="G_TrmE"/>
</dbReference>
<dbReference type="InterPro" id="IPR006073">
    <property type="entry name" value="GTP-bd"/>
</dbReference>
<dbReference type="InterPro" id="IPR018948">
    <property type="entry name" value="GTP-bd_TrmE_N"/>
</dbReference>
<dbReference type="InterPro" id="IPR004520">
    <property type="entry name" value="GTPase_MnmE"/>
</dbReference>
<dbReference type="InterPro" id="IPR027368">
    <property type="entry name" value="MnmE_dom2"/>
</dbReference>
<dbReference type="InterPro" id="IPR025867">
    <property type="entry name" value="MnmE_helical"/>
</dbReference>
<dbReference type="InterPro" id="IPR027417">
    <property type="entry name" value="P-loop_NTPase"/>
</dbReference>
<dbReference type="InterPro" id="IPR005225">
    <property type="entry name" value="Small_GTP-bd"/>
</dbReference>
<dbReference type="InterPro" id="IPR027266">
    <property type="entry name" value="TrmE/GcvT_dom1"/>
</dbReference>
<dbReference type="NCBIfam" id="TIGR00450">
    <property type="entry name" value="mnmE_trmE_thdF"/>
    <property type="match status" value="1"/>
</dbReference>
<dbReference type="NCBIfam" id="NF003661">
    <property type="entry name" value="PRK05291.1-3"/>
    <property type="match status" value="1"/>
</dbReference>
<dbReference type="NCBIfam" id="TIGR00231">
    <property type="entry name" value="small_GTP"/>
    <property type="match status" value="1"/>
</dbReference>
<dbReference type="PANTHER" id="PTHR42714">
    <property type="entry name" value="TRNA MODIFICATION GTPASE GTPBP3"/>
    <property type="match status" value="1"/>
</dbReference>
<dbReference type="PANTHER" id="PTHR42714:SF2">
    <property type="entry name" value="TRNA MODIFICATION GTPASE GTPBP3, MITOCHONDRIAL"/>
    <property type="match status" value="1"/>
</dbReference>
<dbReference type="Pfam" id="PF01926">
    <property type="entry name" value="MMR_HSR1"/>
    <property type="match status" value="1"/>
</dbReference>
<dbReference type="Pfam" id="PF12631">
    <property type="entry name" value="MnmE_helical"/>
    <property type="match status" value="1"/>
</dbReference>
<dbReference type="Pfam" id="PF10396">
    <property type="entry name" value="TrmE_N"/>
    <property type="match status" value="1"/>
</dbReference>
<dbReference type="SUPFAM" id="SSF52540">
    <property type="entry name" value="P-loop containing nucleoside triphosphate hydrolases"/>
    <property type="match status" value="1"/>
</dbReference>
<dbReference type="SUPFAM" id="SSF116878">
    <property type="entry name" value="TrmE connector domain"/>
    <property type="match status" value="1"/>
</dbReference>
<dbReference type="PROSITE" id="PS51709">
    <property type="entry name" value="G_TRME"/>
    <property type="match status" value="1"/>
</dbReference>
<reference key="1">
    <citation type="journal article" date="2004" name="Nat. Biotechnol.">
        <title>The genome sequence of the capnophilic rumen bacterium Mannheimia succiniciproducens.</title>
        <authorList>
            <person name="Hong S.H."/>
            <person name="Kim J.S."/>
            <person name="Lee S.Y."/>
            <person name="In Y.H."/>
            <person name="Choi S.S."/>
            <person name="Rih J.-K."/>
            <person name="Kim C.H."/>
            <person name="Jeong H."/>
            <person name="Hur C.G."/>
            <person name="Kim J.J."/>
        </authorList>
    </citation>
    <scope>NUCLEOTIDE SEQUENCE [LARGE SCALE GENOMIC DNA]</scope>
    <source>
        <strain>KCTC 0769BP / MBEL55E</strain>
    </source>
</reference>
<proteinExistence type="inferred from homology"/>
<organism>
    <name type="scientific">Mannheimia succiniciproducens (strain KCTC 0769BP / MBEL55E)</name>
    <dbReference type="NCBI Taxonomy" id="221988"/>
    <lineage>
        <taxon>Bacteria</taxon>
        <taxon>Pseudomonadati</taxon>
        <taxon>Pseudomonadota</taxon>
        <taxon>Gammaproteobacteria</taxon>
        <taxon>Pasteurellales</taxon>
        <taxon>Pasteurellaceae</taxon>
        <taxon>Basfia</taxon>
    </lineage>
</organism>
<comment type="function">
    <text evidence="1">Exhibits a very high intrinsic GTPase hydrolysis rate. Involved in the addition of a carboxymethylaminomethyl (cmnm) group at the wobble position (U34) of certain tRNAs, forming tRNA-cmnm(5)s(2)U34.</text>
</comment>
<comment type="cofactor">
    <cofactor evidence="1">
        <name>K(+)</name>
        <dbReference type="ChEBI" id="CHEBI:29103"/>
    </cofactor>
    <text evidence="1">Binds 1 potassium ion per subunit.</text>
</comment>
<comment type="subunit">
    <text evidence="1">Homodimer. Heterotetramer of two MnmE and two MnmG subunits.</text>
</comment>
<comment type="subcellular location">
    <subcellularLocation>
        <location evidence="1">Cytoplasm</location>
    </subcellularLocation>
</comment>
<comment type="similarity">
    <text evidence="1">Belongs to the TRAFAC class TrmE-Era-EngA-EngB-Septin-like GTPase superfamily. TrmE GTPase family.</text>
</comment>
<accession>Q65VC3</accession>
<keyword id="KW-0963">Cytoplasm</keyword>
<keyword id="KW-0342">GTP-binding</keyword>
<keyword id="KW-0378">Hydrolase</keyword>
<keyword id="KW-0460">Magnesium</keyword>
<keyword id="KW-0479">Metal-binding</keyword>
<keyword id="KW-0547">Nucleotide-binding</keyword>
<keyword id="KW-0630">Potassium</keyword>
<keyword id="KW-0819">tRNA processing</keyword>
<name>MNME_MANSM</name>
<sequence length="454" mass="49700">MMTKETIVAQATPIGRGGVGILRVSGPLATEVAKAVVDKELKPRMANYLPFKDEDGTILDQGIALYFKSPNSFTGEDVVEFQGHGGQVVLDLLLKRILQVKGVRLARPGEFSEQAFLNDKLDLAQAEAIADLINASSEQAARSALKSLQGEFSKKINQLVDSVIYLRTYVEAAIDFPDEEIDFLADGKIEGHLNDLIGQLDKVRSEAKQGSILREGMKVVIAGRPNAGKSSLLNALAGREAAIVTDIAGTTRDVLREHIHIDGMPLHIIDTAGLRDATDEVERIGITRAWNEIEQADRVILMLDSTDPDSKDLDQAKAEFLSKLPGNIPVTIVRNKSDLSGEKESIEEQEGFTVIRLSAQTQQGVSLLREHLKQSMGYQTGTEGGFLARRRHLEALEHAAEHLQIGRVQLTQFHAGELLAEELRIVQDYLGEITGKFTSDDLLGNIFSSFCIGK</sequence>
<feature type="chain" id="PRO_1000060049" description="tRNA modification GTPase MnmE">
    <location>
        <begin position="1"/>
        <end position="454"/>
    </location>
</feature>
<feature type="domain" description="TrmE-type G">
    <location>
        <begin position="216"/>
        <end position="377"/>
    </location>
</feature>
<feature type="binding site" evidence="1">
    <location>
        <position position="23"/>
    </location>
    <ligand>
        <name>(6S)-5-formyl-5,6,7,8-tetrahydrofolate</name>
        <dbReference type="ChEBI" id="CHEBI:57457"/>
    </ligand>
</feature>
<feature type="binding site" evidence="1">
    <location>
        <position position="80"/>
    </location>
    <ligand>
        <name>(6S)-5-formyl-5,6,7,8-tetrahydrofolate</name>
        <dbReference type="ChEBI" id="CHEBI:57457"/>
    </ligand>
</feature>
<feature type="binding site" evidence="1">
    <location>
        <position position="120"/>
    </location>
    <ligand>
        <name>(6S)-5-formyl-5,6,7,8-tetrahydrofolate</name>
        <dbReference type="ChEBI" id="CHEBI:57457"/>
    </ligand>
</feature>
<feature type="binding site" evidence="1">
    <location>
        <begin position="226"/>
        <end position="231"/>
    </location>
    <ligand>
        <name>GTP</name>
        <dbReference type="ChEBI" id="CHEBI:37565"/>
    </ligand>
</feature>
<feature type="binding site" evidence="1">
    <location>
        <position position="226"/>
    </location>
    <ligand>
        <name>K(+)</name>
        <dbReference type="ChEBI" id="CHEBI:29103"/>
    </ligand>
</feature>
<feature type="binding site" evidence="1">
    <location>
        <position position="230"/>
    </location>
    <ligand>
        <name>Mg(2+)</name>
        <dbReference type="ChEBI" id="CHEBI:18420"/>
    </ligand>
</feature>
<feature type="binding site" evidence="1">
    <location>
        <begin position="245"/>
        <end position="251"/>
    </location>
    <ligand>
        <name>GTP</name>
        <dbReference type="ChEBI" id="CHEBI:37565"/>
    </ligand>
</feature>
<feature type="binding site" evidence="1">
    <location>
        <position position="245"/>
    </location>
    <ligand>
        <name>K(+)</name>
        <dbReference type="ChEBI" id="CHEBI:29103"/>
    </ligand>
</feature>
<feature type="binding site" evidence="1">
    <location>
        <position position="247"/>
    </location>
    <ligand>
        <name>K(+)</name>
        <dbReference type="ChEBI" id="CHEBI:29103"/>
    </ligand>
</feature>
<feature type="binding site" evidence="1">
    <location>
        <position position="250"/>
    </location>
    <ligand>
        <name>K(+)</name>
        <dbReference type="ChEBI" id="CHEBI:29103"/>
    </ligand>
</feature>
<feature type="binding site" evidence="1">
    <location>
        <position position="251"/>
    </location>
    <ligand>
        <name>Mg(2+)</name>
        <dbReference type="ChEBI" id="CHEBI:18420"/>
    </ligand>
</feature>
<feature type="binding site" evidence="1">
    <location>
        <begin position="270"/>
        <end position="273"/>
    </location>
    <ligand>
        <name>GTP</name>
        <dbReference type="ChEBI" id="CHEBI:37565"/>
    </ligand>
</feature>
<feature type="binding site" evidence="1">
    <location>
        <position position="454"/>
    </location>
    <ligand>
        <name>(6S)-5-formyl-5,6,7,8-tetrahydrofolate</name>
        <dbReference type="ChEBI" id="CHEBI:57457"/>
    </ligand>
</feature>